<evidence type="ECO:0000255" key="1">
    <source>
        <dbReference type="HAMAP-Rule" id="MF_01429"/>
    </source>
</evidence>
<sequence length="107" mass="11504">MSITLSDSAAARVNTFLANRGKGFGLRLGVRTSGCSGMAYVLEFVDEPTAEDTVFEDKGVKVVVDGKSLQFLDGTQLDFVKEGLNEGFKFSNPNVKDECGCGESFHV</sequence>
<dbReference type="EMBL" id="CP000026">
    <property type="protein sequence ID" value="AAV76344.1"/>
    <property type="molecule type" value="Genomic_DNA"/>
</dbReference>
<dbReference type="RefSeq" id="WP_000028952.1">
    <property type="nucleotide sequence ID" value="NC_006511.1"/>
</dbReference>
<dbReference type="SMR" id="Q5PNG5"/>
<dbReference type="GeneID" id="66756972"/>
<dbReference type="KEGG" id="spt:SPA0325"/>
<dbReference type="HOGENOM" id="CLU_069054_5_1_6"/>
<dbReference type="Proteomes" id="UP000008185">
    <property type="component" value="Chromosome"/>
</dbReference>
<dbReference type="GO" id="GO:0005829">
    <property type="term" value="C:cytosol"/>
    <property type="evidence" value="ECO:0007669"/>
    <property type="project" value="TreeGrafter"/>
</dbReference>
<dbReference type="GO" id="GO:0051537">
    <property type="term" value="F:2 iron, 2 sulfur cluster binding"/>
    <property type="evidence" value="ECO:0007669"/>
    <property type="project" value="UniProtKB-ARBA"/>
</dbReference>
<dbReference type="GO" id="GO:0005506">
    <property type="term" value="F:iron ion binding"/>
    <property type="evidence" value="ECO:0007669"/>
    <property type="project" value="UniProtKB-UniRule"/>
</dbReference>
<dbReference type="GO" id="GO:0016226">
    <property type="term" value="P:iron-sulfur cluster assembly"/>
    <property type="evidence" value="ECO:0007669"/>
    <property type="project" value="UniProtKB-UniRule"/>
</dbReference>
<dbReference type="FunFam" id="2.60.300.12:FF:000001">
    <property type="entry name" value="Iron-binding protein IscA"/>
    <property type="match status" value="1"/>
</dbReference>
<dbReference type="Gene3D" id="2.60.300.12">
    <property type="entry name" value="HesB-like domain"/>
    <property type="match status" value="1"/>
</dbReference>
<dbReference type="HAMAP" id="MF_01429">
    <property type="entry name" value="Fe_S_insert_IscA"/>
    <property type="match status" value="1"/>
</dbReference>
<dbReference type="InterPro" id="IPR050322">
    <property type="entry name" value="Fe-S_cluster_asmbl/transfer"/>
</dbReference>
<dbReference type="InterPro" id="IPR000361">
    <property type="entry name" value="FeS_biogenesis"/>
</dbReference>
<dbReference type="InterPro" id="IPR016092">
    <property type="entry name" value="FeS_cluster_insertion"/>
</dbReference>
<dbReference type="InterPro" id="IPR017870">
    <property type="entry name" value="FeS_cluster_insertion_CS"/>
</dbReference>
<dbReference type="InterPro" id="IPR035903">
    <property type="entry name" value="HesB-like_dom_sf"/>
</dbReference>
<dbReference type="InterPro" id="IPR011302">
    <property type="entry name" value="IscA_proteobacteria"/>
</dbReference>
<dbReference type="NCBIfam" id="TIGR00049">
    <property type="entry name" value="iron-sulfur cluster assembly accessory protein"/>
    <property type="match status" value="1"/>
</dbReference>
<dbReference type="NCBIfam" id="TIGR02011">
    <property type="entry name" value="IscA"/>
    <property type="match status" value="1"/>
</dbReference>
<dbReference type="NCBIfam" id="NF007049">
    <property type="entry name" value="PRK09502.1"/>
    <property type="match status" value="1"/>
</dbReference>
<dbReference type="PANTHER" id="PTHR10072:SF41">
    <property type="entry name" value="IRON-SULFUR CLUSTER ASSEMBLY 1 HOMOLOG, MITOCHONDRIAL"/>
    <property type="match status" value="1"/>
</dbReference>
<dbReference type="PANTHER" id="PTHR10072">
    <property type="entry name" value="IRON-SULFUR CLUSTER ASSEMBLY PROTEIN"/>
    <property type="match status" value="1"/>
</dbReference>
<dbReference type="Pfam" id="PF01521">
    <property type="entry name" value="Fe-S_biosyn"/>
    <property type="match status" value="1"/>
</dbReference>
<dbReference type="SUPFAM" id="SSF89360">
    <property type="entry name" value="HesB-like domain"/>
    <property type="match status" value="1"/>
</dbReference>
<dbReference type="PROSITE" id="PS01152">
    <property type="entry name" value="HESB"/>
    <property type="match status" value="1"/>
</dbReference>
<name>ISCA_SALPA</name>
<gene>
    <name evidence="1" type="primary">iscA</name>
    <name type="ordered locus">SPA0325</name>
</gene>
<feature type="chain" id="PRO_0000077002" description="Iron-binding protein IscA">
    <location>
        <begin position="1"/>
        <end position="107"/>
    </location>
</feature>
<feature type="binding site" evidence="1">
    <location>
        <position position="35"/>
    </location>
    <ligand>
        <name>Fe cation</name>
        <dbReference type="ChEBI" id="CHEBI:24875"/>
    </ligand>
</feature>
<feature type="binding site" evidence="1">
    <location>
        <position position="99"/>
    </location>
    <ligand>
        <name>Fe cation</name>
        <dbReference type="ChEBI" id="CHEBI:24875"/>
    </ligand>
</feature>
<feature type="binding site" evidence="1">
    <location>
        <position position="101"/>
    </location>
    <ligand>
        <name>Fe cation</name>
        <dbReference type="ChEBI" id="CHEBI:24875"/>
    </ligand>
</feature>
<keyword id="KW-0408">Iron</keyword>
<keyword id="KW-0479">Metal-binding</keyword>
<accession>Q5PNG5</accession>
<reference key="1">
    <citation type="journal article" date="2004" name="Nat. Genet.">
        <title>Comparison of genome degradation in Paratyphi A and Typhi, human-restricted serovars of Salmonella enterica that cause typhoid.</title>
        <authorList>
            <person name="McClelland M."/>
            <person name="Sanderson K.E."/>
            <person name="Clifton S.W."/>
            <person name="Latreille P."/>
            <person name="Porwollik S."/>
            <person name="Sabo A."/>
            <person name="Meyer R."/>
            <person name="Bieri T."/>
            <person name="Ozersky P."/>
            <person name="McLellan M."/>
            <person name="Harkins C.R."/>
            <person name="Wang C."/>
            <person name="Nguyen C."/>
            <person name="Berghoff A."/>
            <person name="Elliott G."/>
            <person name="Kohlberg S."/>
            <person name="Strong C."/>
            <person name="Du F."/>
            <person name="Carter J."/>
            <person name="Kremizki C."/>
            <person name="Layman D."/>
            <person name="Leonard S."/>
            <person name="Sun H."/>
            <person name="Fulton L."/>
            <person name="Nash W."/>
            <person name="Miner T."/>
            <person name="Minx P."/>
            <person name="Delehaunty K."/>
            <person name="Fronick C."/>
            <person name="Magrini V."/>
            <person name="Nhan M."/>
            <person name="Warren W."/>
            <person name="Florea L."/>
            <person name="Spieth J."/>
            <person name="Wilson R.K."/>
        </authorList>
    </citation>
    <scope>NUCLEOTIDE SEQUENCE [LARGE SCALE GENOMIC DNA]</scope>
    <source>
        <strain>ATCC 9150 / SARB42</strain>
    </source>
</reference>
<organism>
    <name type="scientific">Salmonella paratyphi A (strain ATCC 9150 / SARB42)</name>
    <dbReference type="NCBI Taxonomy" id="295319"/>
    <lineage>
        <taxon>Bacteria</taxon>
        <taxon>Pseudomonadati</taxon>
        <taxon>Pseudomonadota</taxon>
        <taxon>Gammaproteobacteria</taxon>
        <taxon>Enterobacterales</taxon>
        <taxon>Enterobacteriaceae</taxon>
        <taxon>Salmonella</taxon>
    </lineage>
</organism>
<proteinExistence type="inferred from homology"/>
<comment type="function">
    <text evidence="1">Is able to transfer iron-sulfur clusters to apo-ferredoxin. Multiple cycles of [2Fe2S] cluster formation and transfer are observed, suggesting that IscA acts catalytically. Recruits intracellular free iron so as to provide iron for the assembly of transient iron-sulfur cluster in IscU in the presence of IscS, L-cysteine and the thioredoxin reductase system TrxA/TrxB.</text>
</comment>
<comment type="cofactor">
    <cofactor evidence="1">
        <name>Fe cation</name>
        <dbReference type="ChEBI" id="CHEBI:24875"/>
    </cofactor>
    <text evidence="1">Binds 2 iron ions per dimer. The dimer may bind additional iron ions.</text>
</comment>
<comment type="subunit">
    <text evidence="1">Homodimer; may form tetramers and higher multimers.</text>
</comment>
<comment type="similarity">
    <text evidence="1">Belongs to the HesB/IscA family.</text>
</comment>
<protein>
    <recommendedName>
        <fullName evidence="1">Iron-binding protein IscA</fullName>
    </recommendedName>
    <alternativeName>
        <fullName evidence="1">Iron-sulfur cluster assembly protein</fullName>
    </alternativeName>
</protein>